<keyword id="KW-1185">Reference proteome</keyword>
<keyword id="KW-0687">Ribonucleoprotein</keyword>
<keyword id="KW-0689">Ribosomal protein</keyword>
<name>RS2_TROWT</name>
<organism>
    <name type="scientific">Tropheryma whipplei (strain Twist)</name>
    <name type="common">Whipple's bacillus</name>
    <dbReference type="NCBI Taxonomy" id="203267"/>
    <lineage>
        <taxon>Bacteria</taxon>
        <taxon>Bacillati</taxon>
        <taxon>Actinomycetota</taxon>
        <taxon>Actinomycetes</taxon>
        <taxon>Micrococcales</taxon>
        <taxon>Tropherymataceae</taxon>
        <taxon>Tropheryma</taxon>
    </lineage>
</organism>
<reference key="1">
    <citation type="journal article" date="2003" name="Genome Res.">
        <title>Tropheryma whipplei twist: a human pathogenic Actinobacteria with a reduced genome.</title>
        <authorList>
            <person name="Raoult D."/>
            <person name="Ogata H."/>
            <person name="Audic S."/>
            <person name="Robert C."/>
            <person name="Suhre K."/>
            <person name="Drancourt M."/>
            <person name="Claverie J.-M."/>
        </authorList>
    </citation>
    <scope>NUCLEOTIDE SEQUENCE [LARGE SCALE GENOMIC DNA]</scope>
    <source>
        <strain>Twist</strain>
    </source>
</reference>
<comment type="similarity">
    <text evidence="1">Belongs to the universal ribosomal protein uS2 family.</text>
</comment>
<comment type="sequence caution" evidence="3">
    <conflict type="erroneous initiation">
        <sequence resource="EMBL-CDS" id="AAO44546"/>
    </conflict>
</comment>
<dbReference type="EMBL" id="AE014184">
    <property type="protein sequence ID" value="AAO44546.1"/>
    <property type="status" value="ALT_INIT"/>
    <property type="molecule type" value="Genomic_DNA"/>
</dbReference>
<dbReference type="SMR" id="Q83G71"/>
<dbReference type="STRING" id="203267.TWT_449"/>
<dbReference type="KEGG" id="twh:TWT_449"/>
<dbReference type="eggNOG" id="COG0052">
    <property type="taxonomic scope" value="Bacteria"/>
</dbReference>
<dbReference type="HOGENOM" id="CLU_040318_2_3_11"/>
<dbReference type="Proteomes" id="UP000002200">
    <property type="component" value="Chromosome"/>
</dbReference>
<dbReference type="GO" id="GO:0022627">
    <property type="term" value="C:cytosolic small ribosomal subunit"/>
    <property type="evidence" value="ECO:0007669"/>
    <property type="project" value="TreeGrafter"/>
</dbReference>
<dbReference type="GO" id="GO:0003735">
    <property type="term" value="F:structural constituent of ribosome"/>
    <property type="evidence" value="ECO:0007669"/>
    <property type="project" value="InterPro"/>
</dbReference>
<dbReference type="GO" id="GO:0006412">
    <property type="term" value="P:translation"/>
    <property type="evidence" value="ECO:0007669"/>
    <property type="project" value="UniProtKB-UniRule"/>
</dbReference>
<dbReference type="CDD" id="cd01425">
    <property type="entry name" value="RPS2"/>
    <property type="match status" value="1"/>
</dbReference>
<dbReference type="Gene3D" id="3.40.50.10490">
    <property type="entry name" value="Glucose-6-phosphate isomerase like protein, domain 1"/>
    <property type="match status" value="1"/>
</dbReference>
<dbReference type="Gene3D" id="1.10.287.610">
    <property type="entry name" value="Helix hairpin bin"/>
    <property type="match status" value="1"/>
</dbReference>
<dbReference type="HAMAP" id="MF_00291_B">
    <property type="entry name" value="Ribosomal_uS2_B"/>
    <property type="match status" value="1"/>
</dbReference>
<dbReference type="InterPro" id="IPR001865">
    <property type="entry name" value="Ribosomal_uS2"/>
</dbReference>
<dbReference type="InterPro" id="IPR005706">
    <property type="entry name" value="Ribosomal_uS2_bac/mit/plastid"/>
</dbReference>
<dbReference type="InterPro" id="IPR023591">
    <property type="entry name" value="Ribosomal_uS2_flav_dom_sf"/>
</dbReference>
<dbReference type="NCBIfam" id="TIGR01011">
    <property type="entry name" value="rpsB_bact"/>
    <property type="match status" value="1"/>
</dbReference>
<dbReference type="PANTHER" id="PTHR12534">
    <property type="entry name" value="30S RIBOSOMAL PROTEIN S2 PROKARYOTIC AND ORGANELLAR"/>
    <property type="match status" value="1"/>
</dbReference>
<dbReference type="PANTHER" id="PTHR12534:SF0">
    <property type="entry name" value="SMALL RIBOSOMAL SUBUNIT PROTEIN US2M"/>
    <property type="match status" value="1"/>
</dbReference>
<dbReference type="Pfam" id="PF00318">
    <property type="entry name" value="Ribosomal_S2"/>
    <property type="match status" value="1"/>
</dbReference>
<dbReference type="PRINTS" id="PR00395">
    <property type="entry name" value="RIBOSOMALS2"/>
</dbReference>
<dbReference type="SUPFAM" id="SSF52313">
    <property type="entry name" value="Ribosomal protein S2"/>
    <property type="match status" value="1"/>
</dbReference>
<feature type="chain" id="PRO_0000134269" description="Small ribosomal subunit protein uS2">
    <location>
        <begin position="1"/>
        <end position="287"/>
    </location>
</feature>
<feature type="region of interest" description="Disordered" evidence="2">
    <location>
        <begin position="233"/>
        <end position="287"/>
    </location>
</feature>
<feature type="compositionally biased region" description="Polar residues" evidence="2">
    <location>
        <begin position="250"/>
        <end position="259"/>
    </location>
</feature>
<accession>Q83G71</accession>
<proteinExistence type="inferred from homology"/>
<protein>
    <recommendedName>
        <fullName evidence="1">Small ribosomal subunit protein uS2</fullName>
    </recommendedName>
    <alternativeName>
        <fullName evidence="3">30S ribosomal protein S2</fullName>
    </alternativeName>
</protein>
<evidence type="ECO:0000255" key="1">
    <source>
        <dbReference type="HAMAP-Rule" id="MF_00291"/>
    </source>
</evidence>
<evidence type="ECO:0000256" key="2">
    <source>
        <dbReference type="SAM" id="MobiDB-lite"/>
    </source>
</evidence>
<evidence type="ECO:0000305" key="3"/>
<sequence>MFWRGGLPLVTIRNLLDNGVHFGHTTQRWNPKMKGFILTERCGSYILDMRETIRGIVTAVDFIRDTVARGGEVLFIGTKRQAQQVIFKQASRVGQHYIAHRWLGGLLTNFSTVSKSLVRMKELEEARLDDSVSTKKEQLIRGRELQKLRRSLGGIRNMTKLPALLWVVDTNREGIAVEEARKLGIPVVAILDSNCDPDLVQFPIPGNDDSIRSIELLTGIVADAVAQGLVERHKAPQDDIEPMAEWEKQLLQSGDSSGETRPISGTDRPLDGDLSKGPAPQDEELSD</sequence>
<gene>
    <name evidence="1" type="primary">rpsB</name>
    <name type="ordered locus">TWT_449</name>
</gene>